<dbReference type="EMBL" id="CP000672">
    <property type="protein sequence ID" value="ABR00282.1"/>
    <property type="molecule type" value="Genomic_DNA"/>
</dbReference>
<dbReference type="SMR" id="A5UHM6"/>
<dbReference type="KEGG" id="hiq:CGSHiGG_07075"/>
<dbReference type="HOGENOM" id="CLU_094104_2_0_6"/>
<dbReference type="Proteomes" id="UP000001990">
    <property type="component" value="Chromosome"/>
</dbReference>
<dbReference type="GO" id="GO:0005096">
    <property type="term" value="F:GTPase activator activity"/>
    <property type="evidence" value="ECO:0007669"/>
    <property type="project" value="UniProtKB-KW"/>
</dbReference>
<dbReference type="GO" id="GO:0042254">
    <property type="term" value="P:ribosome biogenesis"/>
    <property type="evidence" value="ECO:0007669"/>
    <property type="project" value="UniProtKB-KW"/>
</dbReference>
<dbReference type="HAMAP" id="MF_01058">
    <property type="entry name" value="GAP_YihI"/>
    <property type="match status" value="1"/>
</dbReference>
<dbReference type="InterPro" id="IPR007336">
    <property type="entry name" value="YihI"/>
</dbReference>
<dbReference type="NCBIfam" id="NF003560">
    <property type="entry name" value="PRK05244.1-1"/>
    <property type="match status" value="1"/>
</dbReference>
<dbReference type="Pfam" id="PF04220">
    <property type="entry name" value="YihI"/>
    <property type="match status" value="1"/>
</dbReference>
<feature type="chain" id="PRO_1000064427" description="Der GTPase-activating protein YihI">
    <location>
        <begin position="1"/>
        <end position="186"/>
    </location>
</feature>
<feature type="region of interest" description="Disordered" evidence="2">
    <location>
        <begin position="39"/>
        <end position="77"/>
    </location>
</feature>
<feature type="compositionally biased region" description="Basic and acidic residues" evidence="2">
    <location>
        <begin position="62"/>
        <end position="77"/>
    </location>
</feature>
<sequence length="186" mass="21591">MARKKKTRRITDIMPIRKADKKIDITKARSGKKLTRYELDAKAREDKKKRKHKGLASGSRHSAVEEKANKLQNEIKDPKIGSKKKIPLVVEFVNKPEKGQVIPVIKQVKKQDPMKELENLENNEILNELLDALDAGKTISKSDQQFVDECLDRISELMEELGIEDEDESEDDLYRTFERMDINQFR</sequence>
<gene>
    <name evidence="1" type="primary">yihI</name>
    <name type="ordered locus">CGSHiGG_07075</name>
</gene>
<organism>
    <name type="scientific">Haemophilus influenzae (strain PittGG)</name>
    <dbReference type="NCBI Taxonomy" id="374931"/>
    <lineage>
        <taxon>Bacteria</taxon>
        <taxon>Pseudomonadati</taxon>
        <taxon>Pseudomonadota</taxon>
        <taxon>Gammaproteobacteria</taxon>
        <taxon>Pasteurellales</taxon>
        <taxon>Pasteurellaceae</taxon>
        <taxon>Haemophilus</taxon>
    </lineage>
</organism>
<reference key="1">
    <citation type="journal article" date="2007" name="Genome Biol.">
        <title>Characterization and modeling of the Haemophilus influenzae core and supragenomes based on the complete genomic sequences of Rd and 12 clinical nontypeable strains.</title>
        <authorList>
            <person name="Hogg J.S."/>
            <person name="Hu F.Z."/>
            <person name="Janto B."/>
            <person name="Boissy R."/>
            <person name="Hayes J."/>
            <person name="Keefe R."/>
            <person name="Post J.C."/>
            <person name="Ehrlich G.D."/>
        </authorList>
    </citation>
    <scope>NUCLEOTIDE SEQUENCE [LARGE SCALE GENOMIC DNA]</scope>
    <source>
        <strain>PittGG</strain>
    </source>
</reference>
<protein>
    <recommendedName>
        <fullName evidence="1">Der GTPase-activating protein YihI</fullName>
    </recommendedName>
</protein>
<proteinExistence type="inferred from homology"/>
<keyword id="KW-0343">GTPase activation</keyword>
<keyword id="KW-0690">Ribosome biogenesis</keyword>
<evidence type="ECO:0000255" key="1">
    <source>
        <dbReference type="HAMAP-Rule" id="MF_01058"/>
    </source>
</evidence>
<evidence type="ECO:0000256" key="2">
    <source>
        <dbReference type="SAM" id="MobiDB-lite"/>
    </source>
</evidence>
<accession>A5UHM6</accession>
<name>YIHI_HAEIG</name>
<comment type="function">
    <text evidence="1">A GTPase-activating protein (GAP) that modifies Der/EngA GTPase function. May play a role in ribosome biogenesis.</text>
</comment>
<comment type="subunit">
    <text evidence="1">Interacts with Der.</text>
</comment>
<comment type="similarity">
    <text evidence="1">Belongs to the YihI family.</text>
</comment>